<evidence type="ECO:0000255" key="1">
    <source>
        <dbReference type="HAMAP-Rule" id="MF_00453"/>
    </source>
</evidence>
<sequence>MAKIDLSKYGITGATEIVYNPSYELLFEEETKSTNEGYEVGKESELGAVDVMTGIYTGRSPKDKYIVVDENSKDTVWWTSDEYKNDNHPMSEDVWAKVKDIAKAELSNKKLFVVDAFCGANKDTRMAVRFIVEVAWQAHFVTNMFIKPTAEELENFEPDFVVYNASKAKVENYAELGLNSETCVAFNITSHEQVIINTWYGGEMKKGMFSMMNYYLPLKGIASMHCSANTDKNGENTAIFFGLSGTGKTTLSTDPKRLLIGDDEHGWDDNGVFNFEGGCYAKVINLDKDSEPDIYNAIKRNALLENVTLDENGKIDFADKSVTENTRVSYPINHIENIVRPISSAPAAKNVIFLSADAFGVLPPVSILTPEQTQYYFLSGFTAKLAGTERGITEPTPTFSACFGQAFLELHPTKYAAELVKKMEKSGAKAYLVNTGWNGTGKRISIKDTRGIIDAILSGAINTAPTKKIPMFNFEVPTELPGVDPAILDPRDTYADASEWETKAKDLAARFNKNFVKYTGNEAGKALVAAGPQL</sequence>
<proteinExistence type="inferred from homology"/>
<keyword id="KW-0067">ATP-binding</keyword>
<keyword id="KW-0963">Cytoplasm</keyword>
<keyword id="KW-0210">Decarboxylase</keyword>
<keyword id="KW-0312">Gluconeogenesis</keyword>
<keyword id="KW-0456">Lyase</keyword>
<keyword id="KW-0464">Manganese</keyword>
<keyword id="KW-0479">Metal-binding</keyword>
<keyword id="KW-0547">Nucleotide-binding</keyword>
<keyword id="KW-1185">Reference proteome</keyword>
<accession>C4Z0Q6</accession>
<protein>
    <recommendedName>
        <fullName evidence="1">Phosphoenolpyruvate carboxykinase (ATP)</fullName>
        <shortName evidence="1">PCK</shortName>
        <shortName evidence="1">PEP carboxykinase</shortName>
        <shortName evidence="1">PEPCK</shortName>
        <ecNumber evidence="1">4.1.1.49</ecNumber>
    </recommendedName>
</protein>
<dbReference type="EC" id="4.1.1.49" evidence="1"/>
<dbReference type="EMBL" id="CP001104">
    <property type="protein sequence ID" value="ACR72169.1"/>
    <property type="molecule type" value="Genomic_DNA"/>
</dbReference>
<dbReference type="RefSeq" id="WP_012739404.1">
    <property type="nucleotide sequence ID" value="NC_012778.1"/>
</dbReference>
<dbReference type="SMR" id="C4Z0Q6"/>
<dbReference type="STRING" id="515620.EUBELI_01169"/>
<dbReference type="GeneID" id="41355893"/>
<dbReference type="KEGG" id="eel:EUBELI_01169"/>
<dbReference type="eggNOG" id="COG1866">
    <property type="taxonomic scope" value="Bacteria"/>
</dbReference>
<dbReference type="HOGENOM" id="CLU_018247_0_1_9"/>
<dbReference type="UniPathway" id="UPA00138"/>
<dbReference type="Proteomes" id="UP000001476">
    <property type="component" value="Chromosome"/>
</dbReference>
<dbReference type="GO" id="GO:0005829">
    <property type="term" value="C:cytosol"/>
    <property type="evidence" value="ECO:0007669"/>
    <property type="project" value="TreeGrafter"/>
</dbReference>
<dbReference type="GO" id="GO:0005524">
    <property type="term" value="F:ATP binding"/>
    <property type="evidence" value="ECO:0007669"/>
    <property type="project" value="UniProtKB-UniRule"/>
</dbReference>
<dbReference type="GO" id="GO:0046872">
    <property type="term" value="F:metal ion binding"/>
    <property type="evidence" value="ECO:0007669"/>
    <property type="project" value="UniProtKB-KW"/>
</dbReference>
<dbReference type="GO" id="GO:0004612">
    <property type="term" value="F:phosphoenolpyruvate carboxykinase (ATP) activity"/>
    <property type="evidence" value="ECO:0007669"/>
    <property type="project" value="UniProtKB-UniRule"/>
</dbReference>
<dbReference type="GO" id="GO:0006094">
    <property type="term" value="P:gluconeogenesis"/>
    <property type="evidence" value="ECO:0007669"/>
    <property type="project" value="UniProtKB-UniRule"/>
</dbReference>
<dbReference type="CDD" id="cd00484">
    <property type="entry name" value="PEPCK_ATP"/>
    <property type="match status" value="1"/>
</dbReference>
<dbReference type="FunFam" id="2.170.8.10:FF:000001">
    <property type="entry name" value="Phosphoenolpyruvate carboxykinase (ATP)"/>
    <property type="match status" value="1"/>
</dbReference>
<dbReference type="FunFam" id="3.40.449.10:FF:000001">
    <property type="entry name" value="Phosphoenolpyruvate carboxykinase (ATP)"/>
    <property type="match status" value="1"/>
</dbReference>
<dbReference type="Gene3D" id="3.90.228.20">
    <property type="match status" value="1"/>
</dbReference>
<dbReference type="Gene3D" id="3.40.449.10">
    <property type="entry name" value="Phosphoenolpyruvate Carboxykinase, domain 1"/>
    <property type="match status" value="1"/>
</dbReference>
<dbReference type="Gene3D" id="2.170.8.10">
    <property type="entry name" value="Phosphoenolpyruvate Carboxykinase, domain 2"/>
    <property type="match status" value="1"/>
</dbReference>
<dbReference type="HAMAP" id="MF_00453">
    <property type="entry name" value="PEPCK_ATP"/>
    <property type="match status" value="1"/>
</dbReference>
<dbReference type="InterPro" id="IPR001272">
    <property type="entry name" value="PEP_carboxykinase_ATP"/>
</dbReference>
<dbReference type="InterPro" id="IPR013035">
    <property type="entry name" value="PEP_carboxykinase_C"/>
</dbReference>
<dbReference type="InterPro" id="IPR008210">
    <property type="entry name" value="PEP_carboxykinase_N"/>
</dbReference>
<dbReference type="InterPro" id="IPR015994">
    <property type="entry name" value="PEPCK_ATP_CS"/>
</dbReference>
<dbReference type="NCBIfam" id="TIGR00224">
    <property type="entry name" value="pckA"/>
    <property type="match status" value="1"/>
</dbReference>
<dbReference type="NCBIfam" id="NF006819">
    <property type="entry name" value="PRK09344.1-1"/>
    <property type="match status" value="1"/>
</dbReference>
<dbReference type="NCBIfam" id="NF006820">
    <property type="entry name" value="PRK09344.1-2"/>
    <property type="match status" value="1"/>
</dbReference>
<dbReference type="NCBIfam" id="NF006821">
    <property type="entry name" value="PRK09344.1-3"/>
    <property type="match status" value="1"/>
</dbReference>
<dbReference type="PANTHER" id="PTHR30031:SF0">
    <property type="entry name" value="PHOSPHOENOLPYRUVATE CARBOXYKINASE (ATP)"/>
    <property type="match status" value="1"/>
</dbReference>
<dbReference type="PANTHER" id="PTHR30031">
    <property type="entry name" value="PHOSPHOENOLPYRUVATE CARBOXYKINASE ATP"/>
    <property type="match status" value="1"/>
</dbReference>
<dbReference type="Pfam" id="PF01293">
    <property type="entry name" value="PEPCK_ATP"/>
    <property type="match status" value="1"/>
</dbReference>
<dbReference type="PIRSF" id="PIRSF006294">
    <property type="entry name" value="PEP_crbxkin"/>
    <property type="match status" value="1"/>
</dbReference>
<dbReference type="SUPFAM" id="SSF68923">
    <property type="entry name" value="PEP carboxykinase N-terminal domain"/>
    <property type="match status" value="1"/>
</dbReference>
<dbReference type="SUPFAM" id="SSF53795">
    <property type="entry name" value="PEP carboxykinase-like"/>
    <property type="match status" value="1"/>
</dbReference>
<dbReference type="PROSITE" id="PS00532">
    <property type="entry name" value="PEPCK_ATP"/>
    <property type="match status" value="1"/>
</dbReference>
<reference key="1">
    <citation type="journal article" date="2009" name="Proc. Natl. Acad. Sci. U.S.A.">
        <title>Characterizing a model human gut microbiota composed of members of its two dominant bacterial phyla.</title>
        <authorList>
            <person name="Mahowald M.A."/>
            <person name="Rey F.E."/>
            <person name="Seedorf H."/>
            <person name="Turnbaugh P.J."/>
            <person name="Fulton R.S."/>
            <person name="Wollam A."/>
            <person name="Shah N."/>
            <person name="Wang C."/>
            <person name="Magrini V."/>
            <person name="Wilson R.K."/>
            <person name="Cantarel B.L."/>
            <person name="Coutinho P.M."/>
            <person name="Henrissat B."/>
            <person name="Crock L.W."/>
            <person name="Russell A."/>
            <person name="Verberkmoes N.C."/>
            <person name="Hettich R.L."/>
            <person name="Gordon J.I."/>
        </authorList>
    </citation>
    <scope>NUCLEOTIDE SEQUENCE [LARGE SCALE GENOMIC DNA]</scope>
    <source>
        <strain>ATCC 27750 / DSM 3376 / VPI C15-48 / C15-B4</strain>
    </source>
</reference>
<feature type="chain" id="PRO_1000206237" description="Phosphoenolpyruvate carboxykinase (ATP)">
    <location>
        <begin position="1"/>
        <end position="534"/>
    </location>
</feature>
<feature type="binding site" evidence="1">
    <location>
        <position position="59"/>
    </location>
    <ligand>
        <name>substrate</name>
    </ligand>
</feature>
<feature type="binding site" evidence="1">
    <location>
        <position position="200"/>
    </location>
    <ligand>
        <name>substrate</name>
    </ligand>
</feature>
<feature type="binding site" evidence="1">
    <location>
        <position position="206"/>
    </location>
    <ligand>
        <name>ATP</name>
        <dbReference type="ChEBI" id="CHEBI:30616"/>
    </ligand>
</feature>
<feature type="binding site" evidence="1">
    <location>
        <position position="206"/>
    </location>
    <ligand>
        <name>Mn(2+)</name>
        <dbReference type="ChEBI" id="CHEBI:29035"/>
    </ligand>
</feature>
<feature type="binding site" evidence="1">
    <location>
        <position position="206"/>
    </location>
    <ligand>
        <name>substrate</name>
    </ligand>
</feature>
<feature type="binding site" evidence="1">
    <location>
        <position position="225"/>
    </location>
    <ligand>
        <name>ATP</name>
        <dbReference type="ChEBI" id="CHEBI:30616"/>
    </ligand>
</feature>
<feature type="binding site" evidence="1">
    <location>
        <position position="225"/>
    </location>
    <ligand>
        <name>Mn(2+)</name>
        <dbReference type="ChEBI" id="CHEBI:29035"/>
    </ligand>
</feature>
<feature type="binding site" evidence="1">
    <location>
        <begin position="242"/>
        <end position="250"/>
    </location>
    <ligand>
        <name>ATP</name>
        <dbReference type="ChEBI" id="CHEBI:30616"/>
    </ligand>
</feature>
<feature type="binding site" evidence="1">
    <location>
        <position position="263"/>
    </location>
    <ligand>
        <name>Mn(2+)</name>
        <dbReference type="ChEBI" id="CHEBI:29035"/>
    </ligand>
</feature>
<feature type="binding site" evidence="1">
    <location>
        <position position="291"/>
    </location>
    <ligand>
        <name>ATP</name>
        <dbReference type="ChEBI" id="CHEBI:30616"/>
    </ligand>
</feature>
<feature type="binding site" evidence="1">
    <location>
        <position position="327"/>
    </location>
    <ligand>
        <name>ATP</name>
        <dbReference type="ChEBI" id="CHEBI:30616"/>
    </ligand>
</feature>
<feature type="binding site" evidence="1">
    <location>
        <position position="327"/>
    </location>
    <ligand>
        <name>substrate</name>
    </ligand>
</feature>
<feature type="binding site" evidence="1">
    <location>
        <begin position="443"/>
        <end position="444"/>
    </location>
    <ligand>
        <name>ATP</name>
        <dbReference type="ChEBI" id="CHEBI:30616"/>
    </ligand>
</feature>
<feature type="binding site" evidence="1">
    <location>
        <position position="449"/>
    </location>
    <ligand>
        <name>ATP</name>
        <dbReference type="ChEBI" id="CHEBI:30616"/>
    </ligand>
</feature>
<gene>
    <name evidence="1" type="primary">pckA</name>
    <name type="ordered locus">EUBELI_01169</name>
</gene>
<name>PCKA_LACE2</name>
<comment type="function">
    <text evidence="1">Involved in the gluconeogenesis. Catalyzes the conversion of oxaloacetate (OAA) to phosphoenolpyruvate (PEP) through direct phosphoryl transfer between the nucleoside triphosphate and OAA.</text>
</comment>
<comment type="catalytic activity">
    <reaction evidence="1">
        <text>oxaloacetate + ATP = phosphoenolpyruvate + ADP + CO2</text>
        <dbReference type="Rhea" id="RHEA:18617"/>
        <dbReference type="ChEBI" id="CHEBI:16452"/>
        <dbReference type="ChEBI" id="CHEBI:16526"/>
        <dbReference type="ChEBI" id="CHEBI:30616"/>
        <dbReference type="ChEBI" id="CHEBI:58702"/>
        <dbReference type="ChEBI" id="CHEBI:456216"/>
        <dbReference type="EC" id="4.1.1.49"/>
    </reaction>
</comment>
<comment type="cofactor">
    <cofactor evidence="1">
        <name>Mn(2+)</name>
        <dbReference type="ChEBI" id="CHEBI:29035"/>
    </cofactor>
    <text evidence="1">Binds 1 Mn(2+) ion per subunit.</text>
</comment>
<comment type="pathway">
    <text evidence="1">Carbohydrate biosynthesis; gluconeogenesis.</text>
</comment>
<comment type="subcellular location">
    <subcellularLocation>
        <location evidence="1">Cytoplasm</location>
    </subcellularLocation>
</comment>
<comment type="similarity">
    <text evidence="1">Belongs to the phosphoenolpyruvate carboxykinase (ATP) family.</text>
</comment>
<organism>
    <name type="scientific">Lachnospira eligens (strain ATCC 27750 / DSM 3376 / VPI C15-48 / C15-B4)</name>
    <name type="common">Eubacterium eligens</name>
    <dbReference type="NCBI Taxonomy" id="515620"/>
    <lineage>
        <taxon>Bacteria</taxon>
        <taxon>Bacillati</taxon>
        <taxon>Bacillota</taxon>
        <taxon>Clostridia</taxon>
        <taxon>Lachnospirales</taxon>
        <taxon>Lachnospiraceae</taxon>
        <taxon>Lachnospira</taxon>
    </lineage>
</organism>